<reference key="1">
    <citation type="journal article" date="2004" name="Nat. Biotechnol.">
        <title>The genome sequence of the extreme thermophile Thermus thermophilus.</title>
        <authorList>
            <person name="Henne A."/>
            <person name="Brueggemann H."/>
            <person name="Raasch C."/>
            <person name="Wiezer A."/>
            <person name="Hartsch T."/>
            <person name="Liesegang H."/>
            <person name="Johann A."/>
            <person name="Lienard T."/>
            <person name="Gohl O."/>
            <person name="Martinez-Arias R."/>
            <person name="Jacobi C."/>
            <person name="Starkuviene V."/>
            <person name="Schlenczeck S."/>
            <person name="Dencker S."/>
            <person name="Huber R."/>
            <person name="Klenk H.-P."/>
            <person name="Kramer W."/>
            <person name="Merkl R."/>
            <person name="Gottschalk G."/>
            <person name="Fritz H.-J."/>
        </authorList>
    </citation>
    <scope>NUCLEOTIDE SEQUENCE [LARGE SCALE GENOMIC DNA]</scope>
    <source>
        <strain>ATCC BAA-163 / DSM 7039 / HB27</strain>
    </source>
</reference>
<proteinExistence type="inferred from homology"/>
<dbReference type="EMBL" id="AE017221">
    <property type="protein sequence ID" value="AAS81465.1"/>
    <property type="molecule type" value="Genomic_DNA"/>
</dbReference>
<dbReference type="RefSeq" id="WP_011173537.1">
    <property type="nucleotide sequence ID" value="NC_005835.1"/>
</dbReference>
<dbReference type="SMR" id="Q72IK9"/>
<dbReference type="KEGG" id="tth:TT_C1123"/>
<dbReference type="eggNOG" id="COG0542">
    <property type="taxonomic scope" value="Bacteria"/>
</dbReference>
<dbReference type="HOGENOM" id="CLU_005070_4_0_0"/>
<dbReference type="OrthoDB" id="9803641at2"/>
<dbReference type="Proteomes" id="UP000000592">
    <property type="component" value="Chromosome"/>
</dbReference>
<dbReference type="GO" id="GO:0005737">
    <property type="term" value="C:cytoplasm"/>
    <property type="evidence" value="ECO:0007669"/>
    <property type="project" value="UniProtKB-SubCell"/>
</dbReference>
<dbReference type="GO" id="GO:0005524">
    <property type="term" value="F:ATP binding"/>
    <property type="evidence" value="ECO:0007669"/>
    <property type="project" value="UniProtKB-KW"/>
</dbReference>
<dbReference type="GO" id="GO:0016887">
    <property type="term" value="F:ATP hydrolysis activity"/>
    <property type="evidence" value="ECO:0007669"/>
    <property type="project" value="InterPro"/>
</dbReference>
<dbReference type="GO" id="GO:0034605">
    <property type="term" value="P:cellular response to heat"/>
    <property type="evidence" value="ECO:0007669"/>
    <property type="project" value="TreeGrafter"/>
</dbReference>
<dbReference type="GO" id="GO:0042026">
    <property type="term" value="P:protein refolding"/>
    <property type="evidence" value="ECO:0007669"/>
    <property type="project" value="InterPro"/>
</dbReference>
<dbReference type="CDD" id="cd00009">
    <property type="entry name" value="AAA"/>
    <property type="match status" value="1"/>
</dbReference>
<dbReference type="CDD" id="cd19499">
    <property type="entry name" value="RecA-like_ClpB_Hsp104-like"/>
    <property type="match status" value="1"/>
</dbReference>
<dbReference type="FunFam" id="1.10.8.60:FF:000017">
    <property type="entry name" value="ATP-dependent chaperone ClpB"/>
    <property type="match status" value="1"/>
</dbReference>
<dbReference type="FunFam" id="3.40.50.300:FF:000120">
    <property type="entry name" value="ATP-dependent chaperone ClpB"/>
    <property type="match status" value="1"/>
</dbReference>
<dbReference type="FunFam" id="3.40.50.300:FF:000025">
    <property type="entry name" value="ATP-dependent Clp protease subunit"/>
    <property type="match status" value="1"/>
</dbReference>
<dbReference type="FunFam" id="3.40.50.300:FF:000010">
    <property type="entry name" value="Chaperone clpB 1, putative"/>
    <property type="match status" value="1"/>
</dbReference>
<dbReference type="Gene3D" id="1.10.8.60">
    <property type="match status" value="1"/>
</dbReference>
<dbReference type="Gene3D" id="1.10.1780.10">
    <property type="entry name" value="Clp, N-terminal domain"/>
    <property type="match status" value="1"/>
</dbReference>
<dbReference type="Gene3D" id="3.40.50.300">
    <property type="entry name" value="P-loop containing nucleotide triphosphate hydrolases"/>
    <property type="match status" value="3"/>
</dbReference>
<dbReference type="InterPro" id="IPR003593">
    <property type="entry name" value="AAA+_ATPase"/>
</dbReference>
<dbReference type="InterPro" id="IPR003959">
    <property type="entry name" value="ATPase_AAA_core"/>
</dbReference>
<dbReference type="InterPro" id="IPR017730">
    <property type="entry name" value="Chaperonin_ClpB"/>
</dbReference>
<dbReference type="InterPro" id="IPR019489">
    <property type="entry name" value="Clp_ATPase_C"/>
</dbReference>
<dbReference type="InterPro" id="IPR036628">
    <property type="entry name" value="Clp_N_dom_sf"/>
</dbReference>
<dbReference type="InterPro" id="IPR004176">
    <property type="entry name" value="Clp_R_dom"/>
</dbReference>
<dbReference type="InterPro" id="IPR001270">
    <property type="entry name" value="ClpA/B"/>
</dbReference>
<dbReference type="InterPro" id="IPR018368">
    <property type="entry name" value="ClpA/B_CS1"/>
</dbReference>
<dbReference type="InterPro" id="IPR028299">
    <property type="entry name" value="ClpA/B_CS2"/>
</dbReference>
<dbReference type="InterPro" id="IPR041546">
    <property type="entry name" value="ClpA/ClpB_AAA_lid"/>
</dbReference>
<dbReference type="InterPro" id="IPR050130">
    <property type="entry name" value="ClpA_ClpB"/>
</dbReference>
<dbReference type="InterPro" id="IPR027417">
    <property type="entry name" value="P-loop_NTPase"/>
</dbReference>
<dbReference type="NCBIfam" id="TIGR03346">
    <property type="entry name" value="chaperone_ClpB"/>
    <property type="match status" value="1"/>
</dbReference>
<dbReference type="PANTHER" id="PTHR11638">
    <property type="entry name" value="ATP-DEPENDENT CLP PROTEASE"/>
    <property type="match status" value="1"/>
</dbReference>
<dbReference type="PANTHER" id="PTHR11638:SF18">
    <property type="entry name" value="HEAT SHOCK PROTEIN 104"/>
    <property type="match status" value="1"/>
</dbReference>
<dbReference type="Pfam" id="PF00004">
    <property type="entry name" value="AAA"/>
    <property type="match status" value="1"/>
</dbReference>
<dbReference type="Pfam" id="PF07724">
    <property type="entry name" value="AAA_2"/>
    <property type="match status" value="1"/>
</dbReference>
<dbReference type="Pfam" id="PF17871">
    <property type="entry name" value="AAA_lid_9"/>
    <property type="match status" value="1"/>
</dbReference>
<dbReference type="Pfam" id="PF02861">
    <property type="entry name" value="Clp_N"/>
    <property type="match status" value="2"/>
</dbReference>
<dbReference type="Pfam" id="PF10431">
    <property type="entry name" value="ClpB_D2-small"/>
    <property type="match status" value="1"/>
</dbReference>
<dbReference type="PRINTS" id="PR00300">
    <property type="entry name" value="CLPPROTEASEA"/>
</dbReference>
<dbReference type="SMART" id="SM00382">
    <property type="entry name" value="AAA"/>
    <property type="match status" value="2"/>
</dbReference>
<dbReference type="SMART" id="SM01086">
    <property type="entry name" value="ClpB_D2-small"/>
    <property type="match status" value="1"/>
</dbReference>
<dbReference type="SUPFAM" id="SSF81923">
    <property type="entry name" value="Double Clp-N motif"/>
    <property type="match status" value="1"/>
</dbReference>
<dbReference type="SUPFAM" id="SSF52540">
    <property type="entry name" value="P-loop containing nucleoside triphosphate hydrolases"/>
    <property type="match status" value="2"/>
</dbReference>
<dbReference type="PROSITE" id="PS51903">
    <property type="entry name" value="CLP_R"/>
    <property type="match status" value="1"/>
</dbReference>
<dbReference type="PROSITE" id="PS00870">
    <property type="entry name" value="CLPAB_1"/>
    <property type="match status" value="1"/>
</dbReference>
<dbReference type="PROSITE" id="PS00871">
    <property type="entry name" value="CLPAB_2"/>
    <property type="match status" value="1"/>
</dbReference>
<gene>
    <name type="primary">clpB</name>
    <name type="ordered locus">TT_C1123</name>
</gene>
<name>CLPB_THET2</name>
<feature type="chain" id="PRO_0000191194" description="Chaperone protein ClpB">
    <location>
        <begin position="1"/>
        <end position="854"/>
    </location>
</feature>
<feature type="domain" description="Clp R" evidence="2">
    <location>
        <begin position="3"/>
        <end position="147"/>
    </location>
</feature>
<feature type="region of interest" description="Repeat 1" evidence="2">
    <location>
        <begin position="6"/>
        <end position="71"/>
    </location>
</feature>
<feature type="region of interest" description="Repeat 2" evidence="2">
    <location>
        <begin position="83"/>
        <end position="147"/>
    </location>
</feature>
<feature type="region of interest" description="NBD1" evidence="1">
    <location>
        <begin position="151"/>
        <end position="331"/>
    </location>
</feature>
<feature type="region of interest" description="Linker" evidence="1">
    <location>
        <begin position="332"/>
        <end position="535"/>
    </location>
</feature>
<feature type="region of interest" description="NBD2" evidence="1">
    <location>
        <begin position="545"/>
        <end position="756"/>
    </location>
</feature>
<feature type="region of interest" description="C-terminal" evidence="1">
    <location>
        <begin position="757"/>
        <end position="854"/>
    </location>
</feature>
<feature type="coiled-coil region" evidence="1">
    <location>
        <begin position="382"/>
        <end position="513"/>
    </location>
</feature>
<feature type="binding site" evidence="1">
    <location>
        <begin position="198"/>
        <end position="205"/>
    </location>
    <ligand>
        <name>ATP</name>
        <dbReference type="ChEBI" id="CHEBI:30616"/>
        <label>1</label>
    </ligand>
</feature>
<feature type="binding site" evidence="1">
    <location>
        <begin position="595"/>
        <end position="602"/>
    </location>
    <ligand>
        <name>ATP</name>
        <dbReference type="ChEBI" id="CHEBI:30616"/>
        <label>2</label>
    </ligand>
</feature>
<organism>
    <name type="scientific">Thermus thermophilus (strain ATCC BAA-163 / DSM 7039 / HB27)</name>
    <dbReference type="NCBI Taxonomy" id="262724"/>
    <lineage>
        <taxon>Bacteria</taxon>
        <taxon>Thermotogati</taxon>
        <taxon>Deinococcota</taxon>
        <taxon>Deinococci</taxon>
        <taxon>Thermales</taxon>
        <taxon>Thermaceae</taxon>
        <taxon>Thermus</taxon>
    </lineage>
</organism>
<comment type="function">
    <text evidence="1">Part of a stress-induced multi-chaperone system, it is involved in the recovery of the cell from heat-induced damage, in cooperation with DnaK, DnaJ and GrpE. Acts before DnaK, in the processing of protein aggregates. Protein binding stimulates the ATPase activity; ATP hydrolysis unfolds the denatured protein aggregates, which probably helps expose new hydrophobic binding sites on the surface of ClpB-bound aggregates, contributing to the solubilization and refolding of denatured protein aggregates by DnaK (By similarity).</text>
</comment>
<comment type="subunit">
    <text evidence="1">Homohexamer. The oligomerization is ATP-dependent (By similarity).</text>
</comment>
<comment type="subcellular location">
    <subcellularLocation>
        <location evidence="3">Cytoplasm</location>
    </subcellularLocation>
</comment>
<comment type="domain">
    <text evidence="1">The Clp repeat (R) domain probably functions as a substrate-discriminating domain, recruiting aggregated proteins to the ClpB hexamer and/or stabilizing bound proteins. The NBD2 domain is responsible for oligomerization, whereas the NBD1 domain stabilizes the hexamer probably in an ATP-dependent manner. The movement of the coiled-coil domain is essential for ClpB ability to rescue proteins from an aggregated state, probably by pulling apart large aggregated proteins, which are bound between the coiled-coils motifs of adjacent ClpB subunits in the functional hexamer (By similarity).</text>
</comment>
<comment type="similarity">
    <text evidence="3">Belongs to the ClpA/ClpB family.</text>
</comment>
<keyword id="KW-0067">ATP-binding</keyword>
<keyword id="KW-0143">Chaperone</keyword>
<keyword id="KW-0175">Coiled coil</keyword>
<keyword id="KW-0963">Cytoplasm</keyword>
<keyword id="KW-0547">Nucleotide-binding</keyword>
<keyword id="KW-0677">Repeat</keyword>
<keyword id="KW-0346">Stress response</keyword>
<evidence type="ECO:0000250" key="1"/>
<evidence type="ECO:0000255" key="2">
    <source>
        <dbReference type="PROSITE-ProRule" id="PRU01251"/>
    </source>
</evidence>
<evidence type="ECO:0000305" key="3"/>
<accession>Q72IK9</accession>
<protein>
    <recommendedName>
        <fullName>Chaperone protein ClpB</fullName>
    </recommendedName>
</protein>
<sequence>MNLERWTQAAREALAQAQVLAQRMKHQAIDLPHLWAVLLKDEGGLAWRLLEKAGADPKALKELQERELSRLPKVEGAEVGQYLTSRLSGALNRAEALMEELKDRYVAVDTLVLALAEATPGLPGLEALKGALKELRGGRTVQTEHAESTYNALEQYGIDLTRLAAEGKLDPVIGRDEEIRRVIQILLRRTKNNPVLIGEPGVGKTAIVEGLAQRIVKGDVPEGLKGKRIVSLQMGSLLAGAKYRGEFEERLKAVIQEVVQSQGEVILFIDELHTVVGAGKAEGAVDAGNMLKPALARGELRLIGATTLDEYREIEKDPALERRFQPVYVDEPTVEETISILRGLKEKYEVHHGVRISDSAIIAAATLSHRYITERRLPDKAIDLIDEAAARLRMALESAPEEIDALERKKLQLEIEREALKKEKDPDSQERLKAIEAEIAKLTEEIAKLRAEWEREREILRKLREAQHRLDEVRREIELAERQYDLNRAAELRYGELPKLEAEVEALSEKLRGARFVRLEVTEEDIAEIVSRWTGIPVSKLLEGEREKLLRLEEELHKRVVGQDEAIRAVADAIRRARAGLKDPNRPIGSFLFLGPTGVGKTELAKTLAATLFDTEEAMIRIDMTEYMEKHAVSRLIGAPPGYVGYEEGGQLTEAVRRRPYSVILFDEIEKAHPDVFNILLQILDDGRLTDSHGRTVDFRNTVIILTSNLGSPLILEGLQKGWPYERIRDEVFKVLQQHFRPEFLNRLDEIVVFRPLTKEQIRQIVEIQLSYLRARLAEKRISLELTEAAKDFLAERGYDPVFGARPLRRVIQRELETPLAQKILAGEVKEGDRVQVDVGPAGLVFAVPARVEA</sequence>